<accession>P02542</accession>
<accession>E1BZ05</accession>
<reference evidence="8" key="1">
    <citation type="journal article" date="2004" name="Nature">
        <title>Sequence and comparative analysis of the chicken genome provide unique perspectives on vertebrate evolution.</title>
        <authorList>
            <person name="Hillier L.W."/>
            <person name="Miller W."/>
            <person name="Birney E."/>
            <person name="Warren W."/>
            <person name="Hardison R.C."/>
            <person name="Ponting C.P."/>
            <person name="Bork P."/>
            <person name="Burt D.W."/>
            <person name="Groenen M.A.M."/>
            <person name="Delany M.E."/>
            <person name="Dodgson J.B."/>
            <person name="Chinwalla A.T."/>
            <person name="Cliften P.F."/>
            <person name="Clifton S.W."/>
            <person name="Delehaunty K.D."/>
            <person name="Fronick C."/>
            <person name="Fulton R.S."/>
            <person name="Graves T.A."/>
            <person name="Kremitzki C."/>
            <person name="Layman D."/>
            <person name="Magrini V."/>
            <person name="McPherson J.D."/>
            <person name="Miner T.L."/>
            <person name="Minx P."/>
            <person name="Nash W.E."/>
            <person name="Nhan M.N."/>
            <person name="Nelson J.O."/>
            <person name="Oddy L.G."/>
            <person name="Pohl C.S."/>
            <person name="Randall-Maher J."/>
            <person name="Smith S.M."/>
            <person name="Wallis J.W."/>
            <person name="Yang S.-P."/>
            <person name="Romanov M.N."/>
            <person name="Rondelli C.M."/>
            <person name="Paton B."/>
            <person name="Smith J."/>
            <person name="Morrice D."/>
            <person name="Daniels L."/>
            <person name="Tempest H.G."/>
            <person name="Robertson L."/>
            <person name="Masabanda J.S."/>
            <person name="Griffin D.K."/>
            <person name="Vignal A."/>
            <person name="Fillon V."/>
            <person name="Jacobbson L."/>
            <person name="Kerje S."/>
            <person name="Andersson L."/>
            <person name="Crooijmans R.P."/>
            <person name="Aerts J."/>
            <person name="van der Poel J.J."/>
            <person name="Ellegren H."/>
            <person name="Caldwell R.B."/>
            <person name="Hubbard S.J."/>
            <person name="Grafham D.V."/>
            <person name="Kierzek A.M."/>
            <person name="McLaren S.R."/>
            <person name="Overton I.M."/>
            <person name="Arakawa H."/>
            <person name="Beattie K.J."/>
            <person name="Bezzubov Y."/>
            <person name="Boardman P.E."/>
            <person name="Bonfield J.K."/>
            <person name="Croning M.D.R."/>
            <person name="Davies R.M."/>
            <person name="Francis M.D."/>
            <person name="Humphray S.J."/>
            <person name="Scott C.E."/>
            <person name="Taylor R.G."/>
            <person name="Tickle C."/>
            <person name="Brown W.R.A."/>
            <person name="Rogers J."/>
            <person name="Buerstedde J.-M."/>
            <person name="Wilson S.A."/>
            <person name="Stubbs L."/>
            <person name="Ovcharenko I."/>
            <person name="Gordon L."/>
            <person name="Lucas S."/>
            <person name="Miller M.M."/>
            <person name="Inoko H."/>
            <person name="Shiina T."/>
            <person name="Kaufman J."/>
            <person name="Salomonsen J."/>
            <person name="Skjoedt K."/>
            <person name="Wong G.K.-S."/>
            <person name="Wang J."/>
            <person name="Liu B."/>
            <person name="Wang J."/>
            <person name="Yu J."/>
            <person name="Yang H."/>
            <person name="Nefedov M."/>
            <person name="Koriabine M."/>
            <person name="Dejong P.J."/>
            <person name="Goodstadt L."/>
            <person name="Webber C."/>
            <person name="Dickens N.J."/>
            <person name="Letunic I."/>
            <person name="Suyama M."/>
            <person name="Torrents D."/>
            <person name="von Mering C."/>
            <person name="Zdobnov E.M."/>
            <person name="Makova K."/>
            <person name="Nekrutenko A."/>
            <person name="Elnitski L."/>
            <person name="Eswara P."/>
            <person name="King D.C."/>
            <person name="Yang S.-P."/>
            <person name="Tyekucheva S."/>
            <person name="Radakrishnan A."/>
            <person name="Harris R.S."/>
            <person name="Chiaromonte F."/>
            <person name="Taylor J."/>
            <person name="He J."/>
            <person name="Rijnkels M."/>
            <person name="Griffiths-Jones S."/>
            <person name="Ureta-Vidal A."/>
            <person name="Hoffman M.M."/>
            <person name="Severin J."/>
            <person name="Searle S.M.J."/>
            <person name="Law A.S."/>
            <person name="Speed D."/>
            <person name="Waddington D."/>
            <person name="Cheng Z."/>
            <person name="Tuzun E."/>
            <person name="Eichler E."/>
            <person name="Bao Z."/>
            <person name="Flicek P."/>
            <person name="Shteynberg D.D."/>
            <person name="Brent M.R."/>
            <person name="Bye J.M."/>
            <person name="Huckle E.J."/>
            <person name="Chatterji S."/>
            <person name="Dewey C."/>
            <person name="Pachter L."/>
            <person name="Kouranov A."/>
            <person name="Mourelatos Z."/>
            <person name="Hatzigeorgiou A.G."/>
            <person name="Paterson A.H."/>
            <person name="Ivarie R."/>
            <person name="Brandstrom M."/>
            <person name="Axelsson E."/>
            <person name="Backstrom N."/>
            <person name="Berlin S."/>
            <person name="Webster M.T."/>
            <person name="Pourquie O."/>
            <person name="Reymond A."/>
            <person name="Ucla C."/>
            <person name="Antonarakis S.E."/>
            <person name="Long M."/>
            <person name="Emerson J.J."/>
            <person name="Betran E."/>
            <person name="Dupanloup I."/>
            <person name="Kaessmann H."/>
            <person name="Hinrichs A.S."/>
            <person name="Bejerano G."/>
            <person name="Furey T.S."/>
            <person name="Harte R.A."/>
            <person name="Raney B."/>
            <person name="Siepel A."/>
            <person name="Kent W.J."/>
            <person name="Haussler D."/>
            <person name="Eyras E."/>
            <person name="Castelo R."/>
            <person name="Abril J.F."/>
            <person name="Castellano S."/>
            <person name="Camara F."/>
            <person name="Parra G."/>
            <person name="Guigo R."/>
            <person name="Bourque G."/>
            <person name="Tesler G."/>
            <person name="Pevzner P.A."/>
            <person name="Smit A."/>
            <person name="Fulton L.A."/>
            <person name="Mardis E.R."/>
            <person name="Wilson R.K."/>
        </authorList>
    </citation>
    <scope>NUCLEOTIDE SEQUENCE [LARGE SCALE GENOMIC DNA]</scope>
    <source>
        <strain evidence="8">Red jungle fowl</strain>
    </source>
</reference>
<reference key="2">
    <citation type="journal article" date="1982" name="EMBO J.">
        <title>The amino acid sequence of chicken muscle desmin provides a common structural model for intermediate filament proteins.</title>
        <authorList>
            <person name="Geisler N."/>
            <person name="Weber K."/>
        </authorList>
    </citation>
    <scope>PROTEIN SEQUENCE OF 2-464</scope>
    <source>
        <tissue>Gizzard</tissue>
    </source>
</reference>
<reference key="3">
    <citation type="journal article" date="1983" name="EMBO J.">
        <authorList>
            <person name="Geisler N."/>
            <person name="Weber K."/>
        </authorList>
    </citation>
    <scope>ERRATUM OF PUBMED:6202512</scope>
</reference>
<reference key="4">
    <citation type="journal article" date="1982" name="Cell">
        <title>Proteinchemical characterization of three structurally distinct domains along the protofilament unit of desmin 10 nm filaments.</title>
        <authorList>
            <person name="Geisler N."/>
            <person name="Kaufmann E."/>
            <person name="Weber K."/>
        </authorList>
    </citation>
    <scope>PROTEIN SEQUENCE OF 2-89 AND 255-416</scope>
</reference>
<reference key="5">
    <citation type="journal article" date="1981" name="Proc. Natl. Acad. Sci. U.S.A.">
        <title>Comparison of the proteins of two immunologically distinct intermediate-sized filaments by amino acid sequence analysis: desmin and vimentin.</title>
        <authorList>
            <person name="Geisler N."/>
            <person name="Weber K."/>
        </authorList>
    </citation>
    <scope>PROTEIN SEQUENCE OF 325-464</scope>
</reference>
<reference key="6">
    <citation type="journal article" date="1984" name="Proc. Natl. Acad. Sci. U.S.A.">
        <title>Characterization and regulation in the expression of a gene coding for the intermediate filament protein desmin.</title>
        <authorList>
            <person name="Capetanaki Y.G."/>
            <person name="Ngai J."/>
            <person name="Lazarides E."/>
        </authorList>
    </citation>
    <scope>NUCLEOTIDE SEQUENCE [MRNA] OF 367-464</scope>
</reference>
<reference key="7">
    <citation type="journal article" date="1993" name="Biochem. Biophys. Res. Commun.">
        <title>cdc2 kinase phosphorylation of desmin at three serine/threonine residues in the amino-terminal head domain.</title>
        <authorList>
            <person name="Kusubata M."/>
            <person name="Matsuoka Y."/>
            <person name="Tsujimura K."/>
            <person name="Ito H."/>
            <person name="Ando S."/>
            <person name="Kamijo M."/>
            <person name="Yasuda H."/>
            <person name="Ohba Y."/>
            <person name="Okumura E."/>
            <person name="Kishimoto T."/>
        </authorList>
    </citation>
    <scope>PHOSPHORYLATION AT SER-7; SER-23 AND THR-65</scope>
</reference>
<comment type="function">
    <text evidence="1 2">Muscle-specific type III intermediate filament essential for proper muscular structure and function. Plays a crucial role in maintaining the structure of sarcomeres, inter-connecting the Z-disks and forming the myofibrils, linking them not only to the sarcolemmal cytoskeleton, but also to the nucleus and mitochondria, thus providing strength for the muscle fiber during activity. In adult striated muscle they form a fibrous network connecting myofibrils to each other and to the plasma membrane from the periphery of the Z-line structures.</text>
</comment>
<comment type="subunit">
    <text evidence="1">Homomer.</text>
</comment>
<comment type="interaction">
    <interactant intactId="EBI-8614455">
        <id>P02542</id>
    </interactant>
    <interactant intactId="EBI-1042651">
        <id>Q96RG2</id>
        <label>PASK</label>
    </interactant>
    <organismsDiffer>true</organismsDiffer>
    <experiments>2</experiments>
</comment>
<comment type="subcellular location">
    <subcellularLocation>
        <location evidence="1">Cytoplasm</location>
        <location evidence="1">Myofibril</location>
        <location evidence="1">Sarcomere</location>
        <location evidence="1">Z line</location>
    </subcellularLocation>
    <subcellularLocation>
        <location evidence="1">Cytoplasm</location>
    </subcellularLocation>
    <subcellularLocation>
        <location evidence="1">Cell membrane</location>
        <location evidence="1">Sarcolemma</location>
    </subcellularLocation>
</comment>
<comment type="similarity">
    <text evidence="3">Belongs to the intermediate filament family.</text>
</comment>
<organism>
    <name type="scientific">Gallus gallus</name>
    <name type="common">Chicken</name>
    <dbReference type="NCBI Taxonomy" id="9031"/>
    <lineage>
        <taxon>Eukaryota</taxon>
        <taxon>Metazoa</taxon>
        <taxon>Chordata</taxon>
        <taxon>Craniata</taxon>
        <taxon>Vertebrata</taxon>
        <taxon>Euteleostomi</taxon>
        <taxon>Archelosauria</taxon>
        <taxon>Archosauria</taxon>
        <taxon>Dinosauria</taxon>
        <taxon>Saurischia</taxon>
        <taxon>Theropoda</taxon>
        <taxon>Coelurosauria</taxon>
        <taxon>Aves</taxon>
        <taxon>Neognathae</taxon>
        <taxon>Galloanserae</taxon>
        <taxon>Galliformes</taxon>
        <taxon>Phasianidae</taxon>
        <taxon>Phasianinae</taxon>
        <taxon>Gallus</taxon>
    </lineage>
</organism>
<proteinExistence type="evidence at protein level"/>
<protein>
    <recommendedName>
        <fullName>Desmin</fullName>
    </recommendedName>
</protein>
<sequence length="464" mass="53513">MSQSYSSSQRVSSYRRTFGGGTSPVFPRASFGSRGSGSSVTSRVYQVSRTSAVPTLSTFRTTRVTPLRTYQSAYQGAGELLDFSLADAMNQEFLQTRTNEKVELQELNDRFANYIEKVRFLEQQNALMVAEVNRLRGKEPTRVAEMYEEELRELRRQVDALTGQRARVEVERDNLLDDLQKLKQRLQEEIQLKEEAENNLAAFRADVDAATLARIDLERRIESLQEEIAFLKKVHEEEIRELQAQLQEQHIQVEMDISKPDLTAALRDIRAQYESIAAKNIAEAEEWYKSKVSDLTQAANKNNDALRQAKQEMLEYRHQIQSYTCEIDALKGTNDSLMRQMREMEERFAGEAGGYQDTIARLEEEIRHLKDEMARHLREYQDLLNVKMALDVEIATYRKLLEGEENRISIPMHQTFASALNFRETSPDQRGSEVHTKKTVMIKTIETRDGEVVSEATQQQHEVL</sequence>
<feature type="initiator methionine" description="Removed" evidence="4">
    <location>
        <position position="1"/>
    </location>
</feature>
<feature type="chain" id="PRO_0000063776" description="Desmin">
    <location>
        <begin position="2"/>
        <end position="464"/>
    </location>
</feature>
<feature type="domain" description="IF rod" evidence="3">
    <location>
        <begin position="100"/>
        <end position="408"/>
    </location>
</feature>
<feature type="region of interest" description="Head">
    <location>
        <begin position="2"/>
        <end position="100"/>
    </location>
</feature>
<feature type="region of interest" description="Coil 1A">
    <location>
        <begin position="101"/>
        <end position="133"/>
    </location>
</feature>
<feature type="region of interest" description="Linker 1">
    <location>
        <begin position="134"/>
        <end position="143"/>
    </location>
</feature>
<feature type="region of interest" description="Coil 1B">
    <location>
        <begin position="144"/>
        <end position="244"/>
    </location>
</feature>
<feature type="region of interest" description="Linker 12">
    <location>
        <begin position="245"/>
        <end position="260"/>
    </location>
</feature>
<feature type="region of interest" description="Coil 2A">
    <location>
        <begin position="261"/>
        <end position="279"/>
    </location>
</feature>
<feature type="region of interest" description="Linker 2">
    <location>
        <begin position="280"/>
        <end position="287"/>
    </location>
</feature>
<feature type="region of interest" description="Coil 2B">
    <location>
        <begin position="288"/>
        <end position="404"/>
    </location>
</feature>
<feature type="region of interest" description="Tail">
    <location>
        <begin position="405"/>
        <end position="464"/>
    </location>
</feature>
<feature type="site" description="Stutter">
    <location>
        <position position="346"/>
    </location>
</feature>
<feature type="modified residue" description="Blocked amino end (Ser)" evidence="5">
    <location>
        <position position="2"/>
    </location>
</feature>
<feature type="modified residue" description="Phosphoserine; by CDK1" evidence="6">
    <location>
        <position position="7"/>
    </location>
</feature>
<feature type="modified residue" description="Phosphoserine; by CDK1" evidence="6">
    <location>
        <position position="23"/>
    </location>
</feature>
<feature type="modified residue" description="Phosphothreonine; by CDK1" evidence="6">
    <location>
        <position position="65"/>
    </location>
</feature>
<feature type="sequence conflict" description="In Ref. 2; AA sequence." evidence="7" ref="2">
    <original>Q</original>
    <variation>E</variation>
    <location>
        <position position="71"/>
    </location>
</feature>
<feature type="sequence conflict" description="In Ref. 2; AA sequence." evidence="7" ref="2">
    <original>E</original>
    <variation>Q</variation>
    <location>
        <position position="139"/>
    </location>
</feature>
<feature type="sequence conflict" description="In Ref. 2; AA sequence." evidence="7" ref="2">
    <original>D</original>
    <variation>N</variation>
    <location>
        <position position="178"/>
    </location>
</feature>
<feature type="sequence conflict" description="In Ref. 2; AA sequence." evidence="7" ref="2">
    <original>R</original>
    <variation>K</variation>
    <location>
        <position position="185"/>
    </location>
</feature>
<feature type="sequence conflict" description="In Ref. 2; AA sequence." evidence="7" ref="2">
    <original>E</original>
    <variation>Q</variation>
    <location>
        <position position="194"/>
    </location>
</feature>
<keyword id="KW-1003">Cell membrane</keyword>
<keyword id="KW-0175">Coiled coil</keyword>
<keyword id="KW-0963">Cytoplasm</keyword>
<keyword id="KW-0903">Direct protein sequencing</keyword>
<keyword id="KW-0403">Intermediate filament</keyword>
<keyword id="KW-0472">Membrane</keyword>
<keyword id="KW-0514">Muscle protein</keyword>
<keyword id="KW-0597">Phosphoprotein</keyword>
<keyword id="KW-1185">Reference proteome</keyword>
<name>DESM_CHICK</name>
<gene>
    <name type="primary">DES</name>
</gene>
<evidence type="ECO:0000250" key="1">
    <source>
        <dbReference type="UniProtKB" id="P17661"/>
    </source>
</evidence>
<evidence type="ECO:0000250" key="2">
    <source>
        <dbReference type="UniProtKB" id="P31001"/>
    </source>
</evidence>
<evidence type="ECO:0000255" key="3">
    <source>
        <dbReference type="PROSITE-ProRule" id="PRU01188"/>
    </source>
</evidence>
<evidence type="ECO:0000269" key="4">
    <source>
    </source>
</evidence>
<evidence type="ECO:0000269" key="5">
    <source>
    </source>
</evidence>
<evidence type="ECO:0000269" key="6">
    <source>
    </source>
</evidence>
<evidence type="ECO:0000305" key="7"/>
<evidence type="ECO:0000312" key="8">
    <source>
        <dbReference type="Proteomes" id="UP000000539"/>
    </source>
</evidence>
<dbReference type="EMBL" id="AADN05000350">
    <property type="status" value="NOT_ANNOTATED_CDS"/>
    <property type="molecule type" value="Genomic_DNA"/>
</dbReference>
<dbReference type="EMBL" id="K02445">
    <property type="protein sequence ID" value="AAA48751.1"/>
    <property type="molecule type" value="mRNA"/>
</dbReference>
<dbReference type="PIR" id="A90969">
    <property type="entry name" value="DMCH"/>
</dbReference>
<dbReference type="RefSeq" id="NP_001383608.1">
    <property type="nucleotide sequence ID" value="NM_001396679.1"/>
</dbReference>
<dbReference type="SMR" id="P02542"/>
<dbReference type="FunCoup" id="P02542">
    <property type="interactions" value="1313"/>
</dbReference>
<dbReference type="IntAct" id="P02542">
    <property type="interactions" value="1"/>
</dbReference>
<dbReference type="MINT" id="P02542"/>
<dbReference type="STRING" id="9031.ENSGALP00000018424"/>
<dbReference type="iPTMnet" id="P02542"/>
<dbReference type="PaxDb" id="9031-ENSGALP00000018424"/>
<dbReference type="GeneID" id="395906"/>
<dbReference type="VEuPathDB" id="HostDB:geneid_395906"/>
<dbReference type="eggNOG" id="KOG0977">
    <property type="taxonomic scope" value="Eukaryota"/>
</dbReference>
<dbReference type="HOGENOM" id="CLU_012560_7_4_1"/>
<dbReference type="InParanoid" id="P02542"/>
<dbReference type="OMA" id="DMEERHG"/>
<dbReference type="OrthoDB" id="2441647at2759"/>
<dbReference type="PhylomeDB" id="P02542"/>
<dbReference type="Reactome" id="R-GGA-390522">
    <property type="pathway name" value="Striated Muscle Contraction"/>
</dbReference>
<dbReference type="PRO" id="PR:P02542"/>
<dbReference type="Proteomes" id="UP000000539">
    <property type="component" value="Chromosome 7"/>
</dbReference>
<dbReference type="Bgee" id="ENSGALG00000011306">
    <property type="expression patterns" value="Expressed in muscle tissue and 13 other cell types or tissues"/>
</dbReference>
<dbReference type="GO" id="GO:0005911">
    <property type="term" value="C:cell-cell junction"/>
    <property type="evidence" value="ECO:0000318"/>
    <property type="project" value="GO_Central"/>
</dbReference>
<dbReference type="GO" id="GO:0005737">
    <property type="term" value="C:cytoplasm"/>
    <property type="evidence" value="ECO:0000250"/>
    <property type="project" value="UniProtKB"/>
</dbReference>
<dbReference type="GO" id="GO:0097433">
    <property type="term" value="C:dense body"/>
    <property type="evidence" value="ECO:0000314"/>
    <property type="project" value="AgBase"/>
</dbReference>
<dbReference type="GO" id="GO:0014704">
    <property type="term" value="C:intercalated disc"/>
    <property type="evidence" value="ECO:0000250"/>
    <property type="project" value="UniProtKB"/>
</dbReference>
<dbReference type="GO" id="GO:0005882">
    <property type="term" value="C:intermediate filament"/>
    <property type="evidence" value="ECO:0000314"/>
    <property type="project" value="AgBase"/>
</dbReference>
<dbReference type="GO" id="GO:0042383">
    <property type="term" value="C:sarcolemma"/>
    <property type="evidence" value="ECO:0000318"/>
    <property type="project" value="GO_Central"/>
</dbReference>
<dbReference type="GO" id="GO:0045098">
    <property type="term" value="C:type III intermediate filament"/>
    <property type="evidence" value="ECO:0000314"/>
    <property type="project" value="CAFA"/>
</dbReference>
<dbReference type="GO" id="GO:0030018">
    <property type="term" value="C:Z disc"/>
    <property type="evidence" value="ECO:0000250"/>
    <property type="project" value="UniProtKB"/>
</dbReference>
<dbReference type="GO" id="GO:0005200">
    <property type="term" value="F:structural constituent of cytoskeleton"/>
    <property type="evidence" value="ECO:0000318"/>
    <property type="project" value="GO_Central"/>
</dbReference>
<dbReference type="GO" id="GO:0045109">
    <property type="term" value="P:intermediate filament organization"/>
    <property type="evidence" value="ECO:0000250"/>
    <property type="project" value="UniProtKB"/>
</dbReference>
<dbReference type="GO" id="GO:0045107">
    <property type="term" value="P:intermediate filament polymerization"/>
    <property type="evidence" value="ECO:0000314"/>
    <property type="project" value="CAFA"/>
</dbReference>
<dbReference type="GO" id="GO:0060538">
    <property type="term" value="P:skeletal muscle organ development"/>
    <property type="evidence" value="ECO:0000318"/>
    <property type="project" value="GO_Central"/>
</dbReference>
<dbReference type="FunFam" id="1.20.5.1160:FF:000001">
    <property type="entry name" value="Keratin type II"/>
    <property type="match status" value="1"/>
</dbReference>
<dbReference type="FunFam" id="1.20.5.170:FF:000002">
    <property type="entry name" value="Type I keratin KA11"/>
    <property type="match status" value="1"/>
</dbReference>
<dbReference type="FunFam" id="1.20.5.500:FF:000001">
    <property type="entry name" value="Type II keratin 23"/>
    <property type="match status" value="1"/>
</dbReference>
<dbReference type="Gene3D" id="1.20.5.170">
    <property type="match status" value="1"/>
</dbReference>
<dbReference type="Gene3D" id="1.20.5.500">
    <property type="entry name" value="Single helix bin"/>
    <property type="match status" value="1"/>
</dbReference>
<dbReference type="Gene3D" id="1.20.5.1160">
    <property type="entry name" value="Vasodilator-stimulated phosphoprotein"/>
    <property type="match status" value="1"/>
</dbReference>
<dbReference type="InterPro" id="IPR018039">
    <property type="entry name" value="IF_conserved"/>
</dbReference>
<dbReference type="InterPro" id="IPR039008">
    <property type="entry name" value="IF_rod_dom"/>
</dbReference>
<dbReference type="InterPro" id="IPR006821">
    <property type="entry name" value="Intermed_filament_DNA-bd"/>
</dbReference>
<dbReference type="InterPro" id="IPR050405">
    <property type="entry name" value="Intermediate_filament"/>
</dbReference>
<dbReference type="PANTHER" id="PTHR45652:SF2">
    <property type="entry name" value="DESMIN"/>
    <property type="match status" value="1"/>
</dbReference>
<dbReference type="PANTHER" id="PTHR45652">
    <property type="entry name" value="GLIAL FIBRILLARY ACIDIC PROTEIN"/>
    <property type="match status" value="1"/>
</dbReference>
<dbReference type="Pfam" id="PF00038">
    <property type="entry name" value="Filament"/>
    <property type="match status" value="1"/>
</dbReference>
<dbReference type="Pfam" id="PF04732">
    <property type="entry name" value="Filament_head"/>
    <property type="match status" value="1"/>
</dbReference>
<dbReference type="SMART" id="SM01391">
    <property type="entry name" value="Filament"/>
    <property type="match status" value="1"/>
</dbReference>
<dbReference type="SUPFAM" id="SSF64593">
    <property type="entry name" value="Intermediate filament protein, coiled coil region"/>
    <property type="match status" value="2"/>
</dbReference>
<dbReference type="PROSITE" id="PS00226">
    <property type="entry name" value="IF_ROD_1"/>
    <property type="match status" value="1"/>
</dbReference>
<dbReference type="PROSITE" id="PS51842">
    <property type="entry name" value="IF_ROD_2"/>
    <property type="match status" value="1"/>
</dbReference>